<accession>Q9JXD7</accession>
<organism>
    <name type="scientific">Neisseria meningitidis serogroup B (strain ATCC BAA-335 / MC58)</name>
    <dbReference type="NCBI Taxonomy" id="122586"/>
    <lineage>
        <taxon>Bacteria</taxon>
        <taxon>Pseudomonadati</taxon>
        <taxon>Pseudomonadota</taxon>
        <taxon>Betaproteobacteria</taxon>
        <taxon>Neisseriales</taxon>
        <taxon>Neisseriaceae</taxon>
        <taxon>Neisseria</taxon>
    </lineage>
</organism>
<sequence>MAEATDVVLVGGGIMSATLGVLLKELEPSWEITLIERLEDVALESSNAWNNAGTGHSALCELNYAPLGANGIIDPARALNIAEQFHVSRQFWATLVAEGKLEDNSFINAVPHMSLVMNEDHCSYLQKRYDAFKTQKLFENMEFSTDRNKISDWAPLMMRGRDENQPVAANYSAEGTDVDFGRLTRQMVKYLQGKGVKTEFNRHVEDIKRESDGAWVLKTADTRNPDGQLTLRTRFLFLGAGGGALTLLQKSGIPEGKGYGGFPVSGLFFRNSNPETAEQHNAKVYGQASVGAPPMSVPHLDTRNVDGKRHLMFGPYAGFRSNFLKQGSLMDLPLSIHMDNLYPMLCAGWANMPLTKYLLGELRKTKEERFASLLEYYPEANPDDWELITAGQRVQIIKKDSEKGGVLQFGTEIVAHADGSLAALLGASPGASTAVPLMIRLMHQCFPERAPSWEDRLKELVPGYGIKLNENPERADEIIAYTAKVLDI</sequence>
<keyword id="KW-0274">FAD</keyword>
<keyword id="KW-0285">Flavoprotein</keyword>
<keyword id="KW-0560">Oxidoreductase</keyword>
<keyword id="KW-1185">Reference proteome</keyword>
<keyword id="KW-0816">Tricarboxylic acid cycle</keyword>
<reference key="1">
    <citation type="journal article" date="2000" name="Science">
        <title>Complete genome sequence of Neisseria meningitidis serogroup B strain MC58.</title>
        <authorList>
            <person name="Tettelin H."/>
            <person name="Saunders N.J."/>
            <person name="Heidelberg J.F."/>
            <person name="Jeffries A.C."/>
            <person name="Nelson K.E."/>
            <person name="Eisen J.A."/>
            <person name="Ketchum K.A."/>
            <person name="Hood D.W."/>
            <person name="Peden J.F."/>
            <person name="Dodson R.J."/>
            <person name="Nelson W.C."/>
            <person name="Gwinn M.L."/>
            <person name="DeBoy R.T."/>
            <person name="Peterson J.D."/>
            <person name="Hickey E.K."/>
            <person name="Haft D.H."/>
            <person name="Salzberg S.L."/>
            <person name="White O."/>
            <person name="Fleischmann R.D."/>
            <person name="Dougherty B.A."/>
            <person name="Mason T.M."/>
            <person name="Ciecko A."/>
            <person name="Parksey D.S."/>
            <person name="Blair E."/>
            <person name="Cittone H."/>
            <person name="Clark E.B."/>
            <person name="Cotton M.D."/>
            <person name="Utterback T.R."/>
            <person name="Khouri H.M."/>
            <person name="Qin H."/>
            <person name="Vamathevan J.J."/>
            <person name="Gill J."/>
            <person name="Scarlato V."/>
            <person name="Masignani V."/>
            <person name="Pizza M."/>
            <person name="Grandi G."/>
            <person name="Sun L."/>
            <person name="Smith H.O."/>
            <person name="Fraser C.M."/>
            <person name="Moxon E.R."/>
            <person name="Rappuoli R."/>
            <person name="Venter J.C."/>
        </authorList>
    </citation>
    <scope>NUCLEOTIDE SEQUENCE [LARGE SCALE GENOMIC DNA]</scope>
    <source>
        <strain>ATCC BAA-335 / MC58</strain>
    </source>
</reference>
<evidence type="ECO:0000255" key="1">
    <source>
        <dbReference type="HAMAP-Rule" id="MF_00212"/>
    </source>
</evidence>
<name>MQO_NEIMB</name>
<dbReference type="EC" id="1.1.5.4" evidence="1"/>
<dbReference type="EMBL" id="AE002098">
    <property type="protein sequence ID" value="AAF42413.1"/>
    <property type="molecule type" value="Genomic_DNA"/>
</dbReference>
<dbReference type="PIR" id="A81006">
    <property type="entry name" value="A81006"/>
</dbReference>
<dbReference type="RefSeq" id="NP_275084.1">
    <property type="nucleotide sequence ID" value="NC_003112.2"/>
</dbReference>
<dbReference type="RefSeq" id="WP_002219978.1">
    <property type="nucleotide sequence ID" value="NC_003112.2"/>
</dbReference>
<dbReference type="SMR" id="Q9JXD7"/>
<dbReference type="FunCoup" id="Q9JXD7">
    <property type="interactions" value="132"/>
</dbReference>
<dbReference type="STRING" id="122586.NMB2096"/>
<dbReference type="PaxDb" id="122586-NMB2096"/>
<dbReference type="KEGG" id="nme:NMB2096"/>
<dbReference type="PATRIC" id="fig|122586.8.peg.2679"/>
<dbReference type="HOGENOM" id="CLU_028151_0_0_4"/>
<dbReference type="InParanoid" id="Q9JXD7"/>
<dbReference type="OrthoDB" id="9763983at2"/>
<dbReference type="UniPathway" id="UPA00223">
    <property type="reaction ID" value="UER01008"/>
</dbReference>
<dbReference type="Proteomes" id="UP000000425">
    <property type="component" value="Chromosome"/>
</dbReference>
<dbReference type="GO" id="GO:0005737">
    <property type="term" value="C:cytoplasm"/>
    <property type="evidence" value="ECO:0000318"/>
    <property type="project" value="GO_Central"/>
</dbReference>
<dbReference type="GO" id="GO:0008924">
    <property type="term" value="F:L-malate dehydrogenase (quinone) activity"/>
    <property type="evidence" value="ECO:0007669"/>
    <property type="project" value="UniProtKB-UniRule"/>
</dbReference>
<dbReference type="GO" id="GO:0006099">
    <property type="term" value="P:tricarboxylic acid cycle"/>
    <property type="evidence" value="ECO:0007669"/>
    <property type="project" value="UniProtKB-UniRule"/>
</dbReference>
<dbReference type="Gene3D" id="3.30.9.10">
    <property type="entry name" value="D-Amino Acid Oxidase, subunit A, domain 2"/>
    <property type="match status" value="1"/>
</dbReference>
<dbReference type="Gene3D" id="3.50.50.60">
    <property type="entry name" value="FAD/NAD(P)-binding domain"/>
    <property type="match status" value="1"/>
</dbReference>
<dbReference type="HAMAP" id="MF_00212">
    <property type="entry name" value="MQO"/>
    <property type="match status" value="1"/>
</dbReference>
<dbReference type="InterPro" id="IPR036188">
    <property type="entry name" value="FAD/NAD-bd_sf"/>
</dbReference>
<dbReference type="InterPro" id="IPR006231">
    <property type="entry name" value="MQO"/>
</dbReference>
<dbReference type="NCBIfam" id="TIGR01320">
    <property type="entry name" value="mal_quin_oxido"/>
    <property type="match status" value="1"/>
</dbReference>
<dbReference type="NCBIfam" id="NF003603">
    <property type="entry name" value="PRK05257.1-1"/>
    <property type="match status" value="1"/>
</dbReference>
<dbReference type="NCBIfam" id="NF003605">
    <property type="entry name" value="PRK05257.1-4"/>
    <property type="match status" value="1"/>
</dbReference>
<dbReference type="NCBIfam" id="NF003606">
    <property type="entry name" value="PRK05257.2-1"/>
    <property type="match status" value="1"/>
</dbReference>
<dbReference type="NCBIfam" id="NF003609">
    <property type="entry name" value="PRK05257.2-5"/>
    <property type="match status" value="1"/>
</dbReference>
<dbReference type="NCBIfam" id="NF003610">
    <property type="entry name" value="PRK05257.3-1"/>
    <property type="match status" value="1"/>
</dbReference>
<dbReference type="NCBIfam" id="NF003611">
    <property type="entry name" value="PRK05257.3-2"/>
    <property type="match status" value="1"/>
</dbReference>
<dbReference type="NCBIfam" id="NF009875">
    <property type="entry name" value="PRK13339.1"/>
    <property type="match status" value="1"/>
</dbReference>
<dbReference type="PANTHER" id="PTHR43104">
    <property type="entry name" value="L-2-HYDROXYGLUTARATE DEHYDROGENASE, MITOCHONDRIAL"/>
    <property type="match status" value="1"/>
</dbReference>
<dbReference type="PANTHER" id="PTHR43104:SF2">
    <property type="entry name" value="L-2-HYDROXYGLUTARATE DEHYDROGENASE, MITOCHONDRIAL"/>
    <property type="match status" value="1"/>
</dbReference>
<dbReference type="Pfam" id="PF06039">
    <property type="entry name" value="Mqo"/>
    <property type="match status" value="1"/>
</dbReference>
<dbReference type="SUPFAM" id="SSF51905">
    <property type="entry name" value="FAD/NAD(P)-binding domain"/>
    <property type="match status" value="1"/>
</dbReference>
<comment type="catalytic activity">
    <reaction evidence="1">
        <text>(S)-malate + a quinone = a quinol + oxaloacetate</text>
        <dbReference type="Rhea" id="RHEA:46012"/>
        <dbReference type="ChEBI" id="CHEBI:15589"/>
        <dbReference type="ChEBI" id="CHEBI:16452"/>
        <dbReference type="ChEBI" id="CHEBI:24646"/>
        <dbReference type="ChEBI" id="CHEBI:132124"/>
        <dbReference type="EC" id="1.1.5.4"/>
    </reaction>
</comment>
<comment type="cofactor">
    <cofactor evidence="1">
        <name>FAD</name>
        <dbReference type="ChEBI" id="CHEBI:57692"/>
    </cofactor>
</comment>
<comment type="pathway">
    <text evidence="1">Carbohydrate metabolism; tricarboxylic acid cycle; oxaloacetate from (S)-malate (quinone route): step 1/1.</text>
</comment>
<comment type="similarity">
    <text evidence="1">Belongs to the MQO family.</text>
</comment>
<gene>
    <name evidence="1" type="primary">mqo</name>
    <name type="ordered locus">NMB2096</name>
</gene>
<feature type="chain" id="PRO_0000128724" description="Probable malate:quinone oxidoreductase">
    <location>
        <begin position="1"/>
        <end position="488"/>
    </location>
</feature>
<proteinExistence type="inferred from homology"/>
<protein>
    <recommendedName>
        <fullName evidence="1">Probable malate:quinone oxidoreductase</fullName>
        <ecNumber evidence="1">1.1.5.4</ecNumber>
    </recommendedName>
    <alternativeName>
        <fullName evidence="1">MQO</fullName>
    </alternativeName>
    <alternativeName>
        <fullName evidence="1">Malate dehydrogenase [quinone]</fullName>
    </alternativeName>
</protein>